<gene>
    <name evidence="1" type="primary">rplF</name>
    <name type="ordered locus">Rv0719</name>
    <name type="ORF">MTCY210.38</name>
</gene>
<feature type="chain" id="PRO_0000131062" description="Large ribosomal subunit protein uL6">
    <location>
        <begin position="1"/>
        <end position="179"/>
    </location>
</feature>
<accession>P9WH81</accession>
<accession>L0T7B0</accession>
<accession>P66311</accession>
<accession>P95067</accession>
<reference key="1">
    <citation type="journal article" date="1998" name="Nature">
        <title>Deciphering the biology of Mycobacterium tuberculosis from the complete genome sequence.</title>
        <authorList>
            <person name="Cole S.T."/>
            <person name="Brosch R."/>
            <person name="Parkhill J."/>
            <person name="Garnier T."/>
            <person name="Churcher C.M."/>
            <person name="Harris D.E."/>
            <person name="Gordon S.V."/>
            <person name="Eiglmeier K."/>
            <person name="Gas S."/>
            <person name="Barry C.E. III"/>
            <person name="Tekaia F."/>
            <person name="Badcock K."/>
            <person name="Basham D."/>
            <person name="Brown D."/>
            <person name="Chillingworth T."/>
            <person name="Connor R."/>
            <person name="Davies R.M."/>
            <person name="Devlin K."/>
            <person name="Feltwell T."/>
            <person name="Gentles S."/>
            <person name="Hamlin N."/>
            <person name="Holroyd S."/>
            <person name="Hornsby T."/>
            <person name="Jagels K."/>
            <person name="Krogh A."/>
            <person name="McLean J."/>
            <person name="Moule S."/>
            <person name="Murphy L.D."/>
            <person name="Oliver S."/>
            <person name="Osborne J."/>
            <person name="Quail M.A."/>
            <person name="Rajandream M.A."/>
            <person name="Rogers J."/>
            <person name="Rutter S."/>
            <person name="Seeger K."/>
            <person name="Skelton S."/>
            <person name="Squares S."/>
            <person name="Squares R."/>
            <person name="Sulston J.E."/>
            <person name="Taylor K."/>
            <person name="Whitehead S."/>
            <person name="Barrell B.G."/>
        </authorList>
    </citation>
    <scope>NUCLEOTIDE SEQUENCE [LARGE SCALE GENOMIC DNA]</scope>
    <source>
        <strain>ATCC 25618 / H37Rv</strain>
    </source>
</reference>
<reference key="2">
    <citation type="journal article" date="2011" name="Mol. Cell. Proteomics">
        <title>Proteogenomic analysis of Mycobacterium tuberculosis by high resolution mass spectrometry.</title>
        <authorList>
            <person name="Kelkar D.S."/>
            <person name="Kumar D."/>
            <person name="Kumar P."/>
            <person name="Balakrishnan L."/>
            <person name="Muthusamy B."/>
            <person name="Yadav A.K."/>
            <person name="Shrivastava P."/>
            <person name="Marimuthu A."/>
            <person name="Anand S."/>
            <person name="Sundaram H."/>
            <person name="Kingsbury R."/>
            <person name="Harsha H.C."/>
            <person name="Nair B."/>
            <person name="Prasad T.S."/>
            <person name="Chauhan D.S."/>
            <person name="Katoch K."/>
            <person name="Katoch V.M."/>
            <person name="Kumar P."/>
            <person name="Chaerkady R."/>
            <person name="Ramachandran S."/>
            <person name="Dash D."/>
            <person name="Pandey A."/>
        </authorList>
    </citation>
    <scope>IDENTIFICATION BY MASS SPECTROMETRY [LARGE SCALE ANALYSIS]</scope>
    <source>
        <strain>ATCC 25618 / H37Rv</strain>
    </source>
</reference>
<comment type="function">
    <text evidence="1">This protein binds to the 23S rRNA, and is important in its secondary structure. It is located near the subunit interface in the base of the L7/L12 stalk, and near the tRNA binding site of the peptidyltransferase center.</text>
</comment>
<comment type="subunit">
    <text evidence="1">Part of the 50S ribosomal subunit.</text>
</comment>
<comment type="similarity">
    <text evidence="1">Belongs to the universal ribosomal protein uL6 family.</text>
</comment>
<name>RL6_MYCTU</name>
<protein>
    <recommendedName>
        <fullName evidence="1">Large ribosomal subunit protein uL6</fullName>
    </recommendedName>
    <alternativeName>
        <fullName evidence="2">50S ribosomal protein L6</fullName>
    </alternativeName>
</protein>
<evidence type="ECO:0000255" key="1">
    <source>
        <dbReference type="HAMAP-Rule" id="MF_01365"/>
    </source>
</evidence>
<evidence type="ECO:0000305" key="2"/>
<dbReference type="EMBL" id="AL123456">
    <property type="protein sequence ID" value="CCP43463.1"/>
    <property type="molecule type" value="Genomic_DNA"/>
</dbReference>
<dbReference type="PIR" id="B70644">
    <property type="entry name" value="B70644"/>
</dbReference>
<dbReference type="RefSeq" id="NP_215233.1">
    <property type="nucleotide sequence ID" value="NC_000962.3"/>
</dbReference>
<dbReference type="RefSeq" id="WP_003403673.1">
    <property type="nucleotide sequence ID" value="NZ_NVQJ01000007.1"/>
</dbReference>
<dbReference type="PDB" id="5V7Q">
    <property type="method" value="EM"/>
    <property type="resolution" value="3.70 A"/>
    <property type="chains" value="G=1-179"/>
</dbReference>
<dbReference type="PDB" id="5V93">
    <property type="method" value="EM"/>
    <property type="resolution" value="4.00 A"/>
    <property type="chains" value="G=1-179"/>
</dbReference>
<dbReference type="PDB" id="7KGB">
    <property type="method" value="EM"/>
    <property type="resolution" value="2.70 A"/>
    <property type="chains" value="G=1-179"/>
</dbReference>
<dbReference type="PDB" id="7MSC">
    <property type="method" value="EM"/>
    <property type="resolution" value="2.97 A"/>
    <property type="chains" value="G=1-179"/>
</dbReference>
<dbReference type="PDB" id="7MSH">
    <property type="method" value="EM"/>
    <property type="resolution" value="3.23 A"/>
    <property type="chains" value="G=1-179"/>
</dbReference>
<dbReference type="PDB" id="7MSM">
    <property type="method" value="EM"/>
    <property type="resolution" value="2.79 A"/>
    <property type="chains" value="G=1-179"/>
</dbReference>
<dbReference type="PDB" id="7MSZ">
    <property type="method" value="EM"/>
    <property type="resolution" value="3.10 A"/>
    <property type="chains" value="G=1-179"/>
</dbReference>
<dbReference type="PDB" id="7MT2">
    <property type="method" value="EM"/>
    <property type="resolution" value="2.76 A"/>
    <property type="chains" value="G=1-179"/>
</dbReference>
<dbReference type="PDB" id="7MT3">
    <property type="method" value="EM"/>
    <property type="resolution" value="2.80 A"/>
    <property type="chains" value="G=1-179"/>
</dbReference>
<dbReference type="PDB" id="7MT7">
    <property type="method" value="EM"/>
    <property type="resolution" value="2.71 A"/>
    <property type="chains" value="G=1-179"/>
</dbReference>
<dbReference type="PDB" id="7SFR">
    <property type="method" value="EM"/>
    <property type="resolution" value="2.60 A"/>
    <property type="chains" value="G=3-179"/>
</dbReference>
<dbReference type="PDBsum" id="5V7Q"/>
<dbReference type="PDBsum" id="5V93"/>
<dbReference type="PDBsum" id="7KGB"/>
<dbReference type="PDBsum" id="7MSC"/>
<dbReference type="PDBsum" id="7MSH"/>
<dbReference type="PDBsum" id="7MSM"/>
<dbReference type="PDBsum" id="7MSZ"/>
<dbReference type="PDBsum" id="7MT2"/>
<dbReference type="PDBsum" id="7MT3"/>
<dbReference type="PDBsum" id="7MT7"/>
<dbReference type="PDBsum" id="7SFR"/>
<dbReference type="EMDB" id="EMD-22865"/>
<dbReference type="EMDB" id="EMD-23961"/>
<dbReference type="EMDB" id="EMD-23962"/>
<dbReference type="EMDB" id="EMD-23969"/>
<dbReference type="EMDB" id="EMD-23972"/>
<dbReference type="EMDB" id="EMD-23974"/>
<dbReference type="EMDB" id="EMD-23975"/>
<dbReference type="EMDB" id="EMD-23976"/>
<dbReference type="EMDB" id="EMD-8645"/>
<dbReference type="SMR" id="P9WH81"/>
<dbReference type="FunCoup" id="P9WH81">
    <property type="interactions" value="403"/>
</dbReference>
<dbReference type="STRING" id="83332.Rv0719"/>
<dbReference type="PaxDb" id="83332-Rv0719"/>
<dbReference type="DNASU" id="888433"/>
<dbReference type="GeneID" id="45424684"/>
<dbReference type="GeneID" id="888433"/>
<dbReference type="KEGG" id="mtu:Rv0719"/>
<dbReference type="KEGG" id="mtv:RVBD_0719"/>
<dbReference type="TubercuList" id="Rv0719"/>
<dbReference type="eggNOG" id="COG0097">
    <property type="taxonomic scope" value="Bacteria"/>
</dbReference>
<dbReference type="InParanoid" id="P9WH81"/>
<dbReference type="OrthoDB" id="9805007at2"/>
<dbReference type="PhylomeDB" id="P9WH81"/>
<dbReference type="PRO" id="PR:P9WH81"/>
<dbReference type="Proteomes" id="UP000001584">
    <property type="component" value="Chromosome"/>
</dbReference>
<dbReference type="GO" id="GO:0022625">
    <property type="term" value="C:cytosolic large ribosomal subunit"/>
    <property type="evidence" value="ECO:0000318"/>
    <property type="project" value="GO_Central"/>
</dbReference>
<dbReference type="GO" id="GO:0009274">
    <property type="term" value="C:peptidoglycan-based cell wall"/>
    <property type="evidence" value="ECO:0007005"/>
    <property type="project" value="MTBBASE"/>
</dbReference>
<dbReference type="GO" id="GO:0005886">
    <property type="term" value="C:plasma membrane"/>
    <property type="evidence" value="ECO:0007005"/>
    <property type="project" value="MTBBASE"/>
</dbReference>
<dbReference type="GO" id="GO:0019843">
    <property type="term" value="F:rRNA binding"/>
    <property type="evidence" value="ECO:0007669"/>
    <property type="project" value="UniProtKB-UniRule"/>
</dbReference>
<dbReference type="GO" id="GO:0003735">
    <property type="term" value="F:structural constituent of ribosome"/>
    <property type="evidence" value="ECO:0000318"/>
    <property type="project" value="GO_Central"/>
</dbReference>
<dbReference type="GO" id="GO:0002181">
    <property type="term" value="P:cytoplasmic translation"/>
    <property type="evidence" value="ECO:0000318"/>
    <property type="project" value="GO_Central"/>
</dbReference>
<dbReference type="FunFam" id="3.90.930.12:FF:000001">
    <property type="entry name" value="50S ribosomal protein L6"/>
    <property type="match status" value="1"/>
</dbReference>
<dbReference type="FunFam" id="3.90.930.12:FF:000002">
    <property type="entry name" value="50S ribosomal protein L6"/>
    <property type="match status" value="1"/>
</dbReference>
<dbReference type="Gene3D" id="3.90.930.12">
    <property type="entry name" value="Ribosomal protein L6, alpha-beta domain"/>
    <property type="match status" value="2"/>
</dbReference>
<dbReference type="HAMAP" id="MF_01365_B">
    <property type="entry name" value="Ribosomal_uL6_B"/>
    <property type="match status" value="1"/>
</dbReference>
<dbReference type="InterPro" id="IPR000702">
    <property type="entry name" value="Ribosomal_uL6-like"/>
</dbReference>
<dbReference type="InterPro" id="IPR036789">
    <property type="entry name" value="Ribosomal_uL6-like_a/b-dom_sf"/>
</dbReference>
<dbReference type="InterPro" id="IPR020040">
    <property type="entry name" value="Ribosomal_uL6_a/b-dom"/>
</dbReference>
<dbReference type="InterPro" id="IPR019906">
    <property type="entry name" value="Ribosomal_uL6_bac-type"/>
</dbReference>
<dbReference type="InterPro" id="IPR002358">
    <property type="entry name" value="Ribosomal_uL6_CS"/>
</dbReference>
<dbReference type="NCBIfam" id="TIGR03654">
    <property type="entry name" value="L6_bact"/>
    <property type="match status" value="1"/>
</dbReference>
<dbReference type="PANTHER" id="PTHR11655">
    <property type="entry name" value="60S/50S RIBOSOMAL PROTEIN L6/L9"/>
    <property type="match status" value="1"/>
</dbReference>
<dbReference type="PANTHER" id="PTHR11655:SF14">
    <property type="entry name" value="LARGE RIBOSOMAL SUBUNIT PROTEIN UL6M"/>
    <property type="match status" value="1"/>
</dbReference>
<dbReference type="Pfam" id="PF00347">
    <property type="entry name" value="Ribosomal_L6"/>
    <property type="match status" value="2"/>
</dbReference>
<dbReference type="PIRSF" id="PIRSF002162">
    <property type="entry name" value="Ribosomal_L6"/>
    <property type="match status" value="1"/>
</dbReference>
<dbReference type="PRINTS" id="PR00059">
    <property type="entry name" value="RIBOSOMALL6"/>
</dbReference>
<dbReference type="SUPFAM" id="SSF56053">
    <property type="entry name" value="Ribosomal protein L6"/>
    <property type="match status" value="2"/>
</dbReference>
<dbReference type="PROSITE" id="PS00525">
    <property type="entry name" value="RIBOSOMAL_L6_1"/>
    <property type="match status" value="1"/>
</dbReference>
<organism>
    <name type="scientific">Mycobacterium tuberculosis (strain ATCC 25618 / H37Rv)</name>
    <dbReference type="NCBI Taxonomy" id="83332"/>
    <lineage>
        <taxon>Bacteria</taxon>
        <taxon>Bacillati</taxon>
        <taxon>Actinomycetota</taxon>
        <taxon>Actinomycetes</taxon>
        <taxon>Mycobacteriales</taxon>
        <taxon>Mycobacteriaceae</taxon>
        <taxon>Mycobacterium</taxon>
        <taxon>Mycobacterium tuberculosis complex</taxon>
    </lineage>
</organism>
<keyword id="KW-0002">3D-structure</keyword>
<keyword id="KW-1185">Reference proteome</keyword>
<keyword id="KW-0687">Ribonucleoprotein</keyword>
<keyword id="KW-0689">Ribosomal protein</keyword>
<keyword id="KW-0694">RNA-binding</keyword>
<keyword id="KW-0699">rRNA-binding</keyword>
<sequence length="179" mass="19377">MSRIGKQPIPVPAGVDVTIEGQSISVKGPKGTLGLTVAEPIKVARNDDGAIVVTRPDDERRNRSLHGLSRTLVSNLVTGVTQGYTTKMEIFGVGYRVQLKGSNLEFALGYSHPVVIEAPEGITFAVQAPTKFTVSGIDKQKVGQIAANIRRLRRPDPYKGKGVRYEGEQIRRKVGKTGK</sequence>
<proteinExistence type="evidence at protein level"/>